<dbReference type="EC" id="3.1.-.-"/>
<dbReference type="EMBL" id="CR382126">
    <property type="protein sequence ID" value="CAG98908.1"/>
    <property type="molecule type" value="Genomic_DNA"/>
</dbReference>
<dbReference type="RefSeq" id="XP_456200.1">
    <property type="nucleotide sequence ID" value="XM_456200.1"/>
</dbReference>
<dbReference type="SMR" id="Q6CIN9"/>
<dbReference type="FunCoup" id="Q6CIN9">
    <property type="interactions" value="59"/>
</dbReference>
<dbReference type="STRING" id="284590.Q6CIN9"/>
<dbReference type="ESTHER" id="klula-q6cin9">
    <property type="family name" value="PGAP1"/>
</dbReference>
<dbReference type="GlyCosmos" id="Q6CIN9">
    <property type="glycosylation" value="8 sites, No reported glycans"/>
</dbReference>
<dbReference type="PaxDb" id="284590-Q6CIN9"/>
<dbReference type="KEGG" id="kla:KLLA0_F25124g"/>
<dbReference type="eggNOG" id="KOG3724">
    <property type="taxonomic scope" value="Eukaryota"/>
</dbReference>
<dbReference type="HOGENOM" id="CLU_006103_0_0_1"/>
<dbReference type="InParanoid" id="Q6CIN9"/>
<dbReference type="OMA" id="ASANTHK"/>
<dbReference type="Proteomes" id="UP000000598">
    <property type="component" value="Chromosome F"/>
</dbReference>
<dbReference type="GO" id="GO:0005789">
    <property type="term" value="C:endoplasmic reticulum membrane"/>
    <property type="evidence" value="ECO:0007669"/>
    <property type="project" value="UniProtKB-SubCell"/>
</dbReference>
<dbReference type="GO" id="GO:0050185">
    <property type="term" value="F:phosphatidylinositol deacylase activity"/>
    <property type="evidence" value="ECO:0007669"/>
    <property type="project" value="TreeGrafter"/>
</dbReference>
<dbReference type="GO" id="GO:0006888">
    <property type="term" value="P:endoplasmic reticulum to Golgi vesicle-mediated transport"/>
    <property type="evidence" value="ECO:0007669"/>
    <property type="project" value="TreeGrafter"/>
</dbReference>
<dbReference type="GO" id="GO:0006505">
    <property type="term" value="P:GPI anchor metabolic process"/>
    <property type="evidence" value="ECO:0007669"/>
    <property type="project" value="TreeGrafter"/>
</dbReference>
<dbReference type="GO" id="GO:0015031">
    <property type="term" value="P:protein transport"/>
    <property type="evidence" value="ECO:0007669"/>
    <property type="project" value="UniProtKB-KW"/>
</dbReference>
<dbReference type="FunFam" id="3.40.50.1820:FF:000056">
    <property type="entry name" value="GPI inositol-deacylase"/>
    <property type="match status" value="1"/>
</dbReference>
<dbReference type="Gene3D" id="3.40.50.1820">
    <property type="entry name" value="alpha/beta hydrolase"/>
    <property type="match status" value="1"/>
</dbReference>
<dbReference type="InterPro" id="IPR029058">
    <property type="entry name" value="AB_hydrolase_fold"/>
</dbReference>
<dbReference type="InterPro" id="IPR012908">
    <property type="entry name" value="PGAP1-ab_dom-like"/>
</dbReference>
<dbReference type="InterPro" id="IPR039529">
    <property type="entry name" value="PGAP1/BST1"/>
</dbReference>
<dbReference type="InterPro" id="IPR056824">
    <property type="entry name" value="PGAP1_TMD"/>
</dbReference>
<dbReference type="PANTHER" id="PTHR15495:SF7">
    <property type="entry name" value="GPI INOSITOL-DEACYLASE"/>
    <property type="match status" value="1"/>
</dbReference>
<dbReference type="PANTHER" id="PTHR15495">
    <property type="entry name" value="NEGATIVE REGULATOR OF VESICLE FORMATION-RELATED"/>
    <property type="match status" value="1"/>
</dbReference>
<dbReference type="Pfam" id="PF07819">
    <property type="entry name" value="PGAP1"/>
    <property type="match status" value="1"/>
</dbReference>
<dbReference type="Pfam" id="PF25141">
    <property type="entry name" value="PGAP1_2nd"/>
    <property type="match status" value="1"/>
</dbReference>
<dbReference type="Pfam" id="PF25140">
    <property type="entry name" value="PGAP1_TMD"/>
    <property type="match status" value="1"/>
</dbReference>
<dbReference type="SUPFAM" id="SSF53474">
    <property type="entry name" value="alpha/beta-Hydrolases"/>
    <property type="match status" value="1"/>
</dbReference>
<dbReference type="PROSITE" id="PS00120">
    <property type="entry name" value="LIPASE_SER"/>
    <property type="match status" value="1"/>
</dbReference>
<name>BST1_KLULA</name>
<feature type="chain" id="PRO_0000277639" description="GPI inositol-deacylase">
    <location>
        <begin position="1"/>
        <end position="975"/>
    </location>
</feature>
<feature type="transmembrane region" description="Helical" evidence="2">
    <location>
        <begin position="27"/>
        <end position="47"/>
    </location>
</feature>
<feature type="transmembrane region" description="Helical" evidence="2">
    <location>
        <begin position="655"/>
        <end position="675"/>
    </location>
</feature>
<feature type="transmembrane region" description="Helical" evidence="2">
    <location>
        <begin position="699"/>
        <end position="719"/>
    </location>
</feature>
<feature type="transmembrane region" description="Helical" evidence="2">
    <location>
        <begin position="751"/>
        <end position="771"/>
    </location>
</feature>
<feature type="transmembrane region" description="Helical" evidence="2">
    <location>
        <begin position="818"/>
        <end position="838"/>
    </location>
</feature>
<feature type="transmembrane region" description="Helical" evidence="2">
    <location>
        <begin position="868"/>
        <end position="888"/>
    </location>
</feature>
<feature type="transmembrane region" description="Helical" evidence="2">
    <location>
        <begin position="932"/>
        <end position="952"/>
    </location>
</feature>
<feature type="transmembrane region" description="Helical" evidence="2">
    <location>
        <begin position="955"/>
        <end position="975"/>
    </location>
</feature>
<feature type="active site" evidence="1">
    <location>
        <position position="210"/>
    </location>
</feature>
<feature type="glycosylation site" description="N-linked (GlcNAc...) asparagine" evidence="2">
    <location>
        <position position="49"/>
    </location>
</feature>
<feature type="glycosylation site" description="N-linked (GlcNAc...) asparagine" evidence="2">
    <location>
        <position position="276"/>
    </location>
</feature>
<feature type="glycosylation site" description="N-linked (GlcNAc...) asparagine" evidence="2">
    <location>
        <position position="384"/>
    </location>
</feature>
<feature type="glycosylation site" description="N-linked (GlcNAc...) asparagine" evidence="2">
    <location>
        <position position="407"/>
    </location>
</feature>
<feature type="glycosylation site" description="N-linked (GlcNAc...) asparagine" evidence="2">
    <location>
        <position position="419"/>
    </location>
</feature>
<feature type="glycosylation site" description="N-linked (GlcNAc...) asparagine" evidence="2">
    <location>
        <position position="488"/>
    </location>
</feature>
<feature type="glycosylation site" description="N-linked (GlcNAc...) asparagine" evidence="2">
    <location>
        <position position="696"/>
    </location>
</feature>
<feature type="glycosylation site" description="N-linked (GlcNAc...) asparagine" evidence="2">
    <location>
        <position position="867"/>
    </location>
</feature>
<organism>
    <name type="scientific">Kluyveromyces lactis (strain ATCC 8585 / CBS 2359 / DSM 70799 / NBRC 1267 / NRRL Y-1140 / WM37)</name>
    <name type="common">Yeast</name>
    <name type="synonym">Candida sphaerica</name>
    <dbReference type="NCBI Taxonomy" id="284590"/>
    <lineage>
        <taxon>Eukaryota</taxon>
        <taxon>Fungi</taxon>
        <taxon>Dikarya</taxon>
        <taxon>Ascomycota</taxon>
        <taxon>Saccharomycotina</taxon>
        <taxon>Saccharomycetes</taxon>
        <taxon>Saccharomycetales</taxon>
        <taxon>Saccharomycetaceae</taxon>
        <taxon>Kluyveromyces</taxon>
    </lineage>
</organism>
<sequence length="975" mass="111164">MVQIDLPAESAVRIRYPTLTKKLRKRSTLVIIVGLLLLCIITSTHISHNFSGSDTPKCRSIYMYPSYARIDGFDSRHTKLAKKYHLYLYREQGKDKEPKHGDEIQLDGIPVLFIPGNAGSFKQARSIAAASANLYFDHKSTIQNSNAKNMDYFTADFNEDFTAFHGQTMLDQAVYLNDAVRYILSMYAQSAAYKESNRPLPKSVILLGHSMGGIVARLMLTLPNHIPESVNTILTLSSPHSTAPVTFDGDILKLYDRVNSYWTSAMNDMGSYFRNNVSVISITGGILDDILPADYTNLQGIVPESNGFTTFTTTIPELWTPIDHLAIVWCDQLRYLLAKYILEIVNDDAGGKTATLDIRMRKGRKFFLSGLERITDADKLIDKNLSAPAVDFSDTESVPENHLLVLNSSESMSTGYAFNISKSVDYSFEMLTSLVQFDIFFCKDIYGKDCINGFSSFSKVPHSTSLQKFPTDSSWGESVSPFRFISLNGSLLQGFQIIVFQGSMKKKEDFVLAKYSDDKSIETASDGLWKLSLFPFRMSLKNKHSFVHGLAFPNLWSSLISFNLKTTFSDEIDSMFRPMMRQYVNNPYETKWHLLAASSSHEINMHNISPFIPLDDTIDKSLNLMFFIPPGEEISLRLSINWKLTLKMLYIRFRLAFASIPISIIALVLCYQFYYYDSPDSKFISFDTGLMNVLNNHSLLIFLFLSVGPIAINHKAILTLLHYLDPISLSKPSSDSHMLNNNYMLGLRETFVWWIGPVFFIISVALLFIILRLINVIEFAVIKISSAITRYTRITFPDPLNDMTHHKLLFNNRQLLGVCFISLGVMVYVPYQFAFILVSLIQMWNCMKLAVFTNRNNAKYSNIHNYNVSFLMLTIFMIPINAPIVVVFLRNFAIRWETAFRSHHNFLAIAPTLLLTLRNSQCNIPIIKNRMNWLIVVSILGYLSFYSFMYGIRNLYWVYHISNILNGVLFFLTIL</sequence>
<reference key="1">
    <citation type="journal article" date="2004" name="Nature">
        <title>Genome evolution in yeasts.</title>
        <authorList>
            <person name="Dujon B."/>
            <person name="Sherman D."/>
            <person name="Fischer G."/>
            <person name="Durrens P."/>
            <person name="Casaregola S."/>
            <person name="Lafontaine I."/>
            <person name="de Montigny J."/>
            <person name="Marck C."/>
            <person name="Neuveglise C."/>
            <person name="Talla E."/>
            <person name="Goffard N."/>
            <person name="Frangeul L."/>
            <person name="Aigle M."/>
            <person name="Anthouard V."/>
            <person name="Babour A."/>
            <person name="Barbe V."/>
            <person name="Barnay S."/>
            <person name="Blanchin S."/>
            <person name="Beckerich J.-M."/>
            <person name="Beyne E."/>
            <person name="Bleykasten C."/>
            <person name="Boisrame A."/>
            <person name="Boyer J."/>
            <person name="Cattolico L."/>
            <person name="Confanioleri F."/>
            <person name="de Daruvar A."/>
            <person name="Despons L."/>
            <person name="Fabre E."/>
            <person name="Fairhead C."/>
            <person name="Ferry-Dumazet H."/>
            <person name="Groppi A."/>
            <person name="Hantraye F."/>
            <person name="Hennequin C."/>
            <person name="Jauniaux N."/>
            <person name="Joyet P."/>
            <person name="Kachouri R."/>
            <person name="Kerrest A."/>
            <person name="Koszul R."/>
            <person name="Lemaire M."/>
            <person name="Lesur I."/>
            <person name="Ma L."/>
            <person name="Muller H."/>
            <person name="Nicaud J.-M."/>
            <person name="Nikolski M."/>
            <person name="Oztas S."/>
            <person name="Ozier-Kalogeropoulos O."/>
            <person name="Pellenz S."/>
            <person name="Potier S."/>
            <person name="Richard G.-F."/>
            <person name="Straub M.-L."/>
            <person name="Suleau A."/>
            <person name="Swennen D."/>
            <person name="Tekaia F."/>
            <person name="Wesolowski-Louvel M."/>
            <person name="Westhof E."/>
            <person name="Wirth B."/>
            <person name="Zeniou-Meyer M."/>
            <person name="Zivanovic Y."/>
            <person name="Bolotin-Fukuhara M."/>
            <person name="Thierry A."/>
            <person name="Bouchier C."/>
            <person name="Caudron B."/>
            <person name="Scarpelli C."/>
            <person name="Gaillardin C."/>
            <person name="Weissenbach J."/>
            <person name="Wincker P."/>
            <person name="Souciet J.-L."/>
        </authorList>
    </citation>
    <scope>NUCLEOTIDE SEQUENCE [LARGE SCALE GENOMIC DNA]</scope>
    <source>
        <strain>ATCC 8585 / CBS 2359 / DSM 70799 / NBRC 1267 / NRRL Y-1140 / WM37</strain>
    </source>
</reference>
<keyword id="KW-0256">Endoplasmic reticulum</keyword>
<keyword id="KW-0325">Glycoprotein</keyword>
<keyword id="KW-0378">Hydrolase</keyword>
<keyword id="KW-0472">Membrane</keyword>
<keyword id="KW-0653">Protein transport</keyword>
<keyword id="KW-1185">Reference proteome</keyword>
<keyword id="KW-0812">Transmembrane</keyword>
<keyword id="KW-1133">Transmembrane helix</keyword>
<keyword id="KW-0813">Transport</keyword>
<proteinExistence type="inferred from homology"/>
<evidence type="ECO:0000250" key="1"/>
<evidence type="ECO:0000255" key="2"/>
<evidence type="ECO:0000305" key="3"/>
<accession>Q6CIN9</accession>
<comment type="function">
    <text evidence="1">Involved in inositol deacylation of GPI-anchored proteins which plays important roles in the quality control and ER-associated degradation of GPI-anchored proteins.</text>
</comment>
<comment type="subcellular location">
    <subcellularLocation>
        <location evidence="1">Endoplasmic reticulum membrane</location>
        <topology evidence="1">Multi-pass membrane protein</topology>
    </subcellularLocation>
</comment>
<comment type="similarity">
    <text evidence="3">Belongs to the GPI inositol-deacylase family.</text>
</comment>
<protein>
    <recommendedName>
        <fullName>GPI inositol-deacylase</fullName>
        <ecNumber>3.1.-.-</ecNumber>
    </recommendedName>
</protein>
<gene>
    <name type="primary">BST1</name>
    <name type="ordered locus">KLLA0F25124g</name>
</gene>